<protein>
    <recommendedName>
        <fullName>Type II secretion system protein E</fullName>
        <shortName>T2SS protein E</shortName>
        <ecNumber evidence="10">7.4.2.8</ecNumber>
    </recommendedName>
    <alternativeName>
        <fullName>General secretion pathway protein E</fullName>
    </alternativeName>
    <alternativeName>
        <fullName>Protein-secreting ATPase</fullName>
    </alternativeName>
    <alternativeName>
        <fullName>Type II traffic warden ATPase</fullName>
    </alternativeName>
</protein>
<sequence length="502" mass="55525">MMTAPLPDIAAPAAPPRRLPFSFAKRQGLLFLCLEEQYWLACRPQVELAAIAEAQRFAGRRLPLKALGEDAFNQALAASYQHDSSAAMQLAEDLGGSLDLAALADQVPETEDLMEQEDDAPIIRLINAILGEAIRENASDIHLETFEKRLVVRFRVDGVLREVLEPKRELAALLVSRIKVMARLDIAEKRIPQDGRISLRVGGREVDIRVSTLPSANGERVVLRLLDKQAGRLNLQHLGMSERDRKLMDETVRKPHGILLVTGPTGSGKTTTLYASLTTLNDRTRNILTVEDPIEYHLEGIGQTQVNAKVDMTFARGLRAILRQDPDVVMVGEIRDRETAEIAVQASLTGHLVLSTLHTNSAIGAITRLVDMGIEPFLLSSSMLGVLAQRLVRVLCPACKEPYRADEAECALLGVDPAAPPTLHRARGCGECHQHGYRGRTGIYELVVFDDHMRSLIHNESSEQEMTRHARTSGPSIRDDGRRKVLEGVTTVEEVLRVTREE</sequence>
<keyword id="KW-0067">ATP-binding</keyword>
<keyword id="KW-0997">Cell inner membrane</keyword>
<keyword id="KW-1003">Cell membrane</keyword>
<keyword id="KW-0472">Membrane</keyword>
<keyword id="KW-0479">Metal-binding</keyword>
<keyword id="KW-0547">Nucleotide-binding</keyword>
<keyword id="KW-0653">Protein transport</keyword>
<keyword id="KW-1185">Reference proteome</keyword>
<keyword id="KW-1278">Translocase</keyword>
<keyword id="KW-0813">Transport</keyword>
<keyword id="KW-0862">Zinc</keyword>
<reference key="1">
    <citation type="journal article" date="1992" name="Mol. Microbiol.">
        <title>Protein secretion in Pseudomonas aeruginosa: characterization of seven xcp genes and processing of secretory apparatus components by prepilin peptidase.</title>
        <authorList>
            <person name="Bally M."/>
            <person name="Filloux A."/>
            <person name="Akrim M."/>
            <person name="Ball G."/>
            <person name="Lazdunski A."/>
            <person name="Tommassen J."/>
        </authorList>
    </citation>
    <scope>NUCLEOTIDE SEQUENCE [GENOMIC DNA]</scope>
    <source>
        <strain>ATCC 15692 / DSM 22644 / CIP 104116 / JCM 14847 / LMG 12228 / 1C / PRS 101 / PAO1</strain>
    </source>
</reference>
<reference key="2">
    <citation type="journal article" date="2000" name="Nature">
        <title>Complete genome sequence of Pseudomonas aeruginosa PAO1, an opportunistic pathogen.</title>
        <authorList>
            <person name="Stover C.K."/>
            <person name="Pham X.-Q.T."/>
            <person name="Erwin A.L."/>
            <person name="Mizoguchi S.D."/>
            <person name="Warrener P."/>
            <person name="Hickey M.J."/>
            <person name="Brinkman F.S.L."/>
            <person name="Hufnagle W.O."/>
            <person name="Kowalik D.J."/>
            <person name="Lagrou M."/>
            <person name="Garber R.L."/>
            <person name="Goltry L."/>
            <person name="Tolentino E."/>
            <person name="Westbrock-Wadman S."/>
            <person name="Yuan Y."/>
            <person name="Brody L.L."/>
            <person name="Coulter S.N."/>
            <person name="Folger K.R."/>
            <person name="Kas A."/>
            <person name="Larbig K."/>
            <person name="Lim R.M."/>
            <person name="Smith K.A."/>
            <person name="Spencer D.H."/>
            <person name="Wong G.K.-S."/>
            <person name="Wu Z."/>
            <person name="Paulsen I.T."/>
            <person name="Reizer J."/>
            <person name="Saier M.H. Jr."/>
            <person name="Hancock R.E.W."/>
            <person name="Lory S."/>
            <person name="Olson M.V."/>
        </authorList>
    </citation>
    <scope>NUCLEOTIDE SEQUENCE [LARGE SCALE GENOMIC DNA]</scope>
    <source>
        <strain>ATCC 15692 / DSM 22644 / CIP 104116 / JCM 14847 / LMG 12228 / 1C / PRS 101 / PAO1</strain>
    </source>
</reference>
<reference key="3">
    <citation type="journal article" date="1993" name="J. Bacteriol.">
        <title>Mutations in the consensus ATP-binding sites of XcpR and PilB eliminate extracellular protein secretion and pilus biogenesis in Pseudomonas aeruginosa.</title>
        <authorList>
            <person name="Turner L.R."/>
            <person name="Lara J.C."/>
            <person name="Nunn D.N."/>
            <person name="Lory S."/>
        </authorList>
    </citation>
    <scope>FUNCTION</scope>
    <scope>CATALYTIC ACTIVITY</scope>
    <scope>DISRUPTION PHENOTYPE</scope>
    <scope>MUTAGENESIS OF GLY-268</scope>
    <source>
        <strain>PAK</strain>
    </source>
</reference>
<reference key="4">
    <citation type="journal article" date="1997" name="Mol. Microbiol.">
        <title>Regulation of the xcp secretion pathway by multiple quorum-sensing modulons in Pseudomonas aeruginosa.</title>
        <authorList>
            <person name="Chapon-Herve V."/>
            <person name="Akrim M."/>
            <person name="Latifi A."/>
            <person name="Williams P."/>
            <person name="Lazdunski A."/>
            <person name="Bally M."/>
        </authorList>
    </citation>
    <scope>INDUCTION BY LASR-LASI AND RHLR-RHLI</scope>
    <source>
        <strain>ATCC 15692 / DSM 22644 / CIP 104116 / JCM 14847 / LMG 12228 / 1C / PRS 101 / PAO1</strain>
    </source>
</reference>
<reference key="5">
    <citation type="journal article" date="1997" name="Mol. Microbiol.">
        <title>The XcpR protein of Pseudomonas aeruginosa dimerizes via its N-terminus.</title>
        <authorList>
            <person name="Turner L.R."/>
            <person name="Olson J.W."/>
            <person name="Lory S."/>
        </authorList>
    </citation>
    <scope>SUBUNIT</scope>
</reference>
<reference key="6">
    <citation type="journal article" date="1999" name="J. Bacteriol.">
        <title>Assembly of XcpR in the cytoplasmic membrane is required for extracellular protein secretion in Pseudomonas aeruginosa.</title>
        <authorList>
            <person name="Ball G."/>
            <person name="Chapon-Herve V."/>
            <person name="Bleves S."/>
            <person name="Michel G."/>
            <person name="Bally M."/>
        </authorList>
    </citation>
    <scope>SUBCELLULAR LOCATION</scope>
    <scope>INTERACTION WITH GSPL/XCPY</scope>
    <source>
        <strain>ATCC 15692 / DSM 22644 / CIP 104116 / JCM 14847 / LMG 12228 / 1C / PRS 101 / PAO1</strain>
    </source>
</reference>
<reference key="7">
    <citation type="journal article" date="2005" name="FEMS Microbiol. Lett.">
        <title>Subcomplexes from the Xcp secretion system of Pseudomonas aeruginosa.</title>
        <authorList>
            <person name="Robert V."/>
            <person name="Filloux A."/>
            <person name="Michel G.P."/>
        </authorList>
    </citation>
    <scope>INTERACTION WITH XCPY/GSPL; XCPZ/GSPM AND XCPS/GSPF</scope>
</reference>
<evidence type="ECO:0000250" key="1">
    <source>
        <dbReference type="UniProtKB" id="P37093"/>
    </source>
</evidence>
<evidence type="ECO:0000255" key="2"/>
<evidence type="ECO:0000256" key="3">
    <source>
        <dbReference type="SAM" id="MobiDB-lite"/>
    </source>
</evidence>
<evidence type="ECO:0000269" key="4">
    <source>
    </source>
</evidence>
<evidence type="ECO:0000269" key="5">
    <source>
    </source>
</evidence>
<evidence type="ECO:0000269" key="6">
    <source>
    </source>
</evidence>
<evidence type="ECO:0000269" key="7">
    <source>
    </source>
</evidence>
<evidence type="ECO:0000269" key="8">
    <source>
    </source>
</evidence>
<evidence type="ECO:0000305" key="9"/>
<evidence type="ECO:0000305" key="10">
    <source>
    </source>
</evidence>
<feature type="chain" id="PRO_0000207289" description="Type II secretion system protein E">
    <location>
        <begin position="1"/>
        <end position="502"/>
    </location>
</feature>
<feature type="region of interest" description="Disordered" evidence="3">
    <location>
        <begin position="461"/>
        <end position="480"/>
    </location>
</feature>
<feature type="binding site" evidence="2">
    <location>
        <begin position="263"/>
        <end position="270"/>
    </location>
    <ligand>
        <name>ATP</name>
        <dbReference type="ChEBI" id="CHEBI:30616"/>
    </ligand>
</feature>
<feature type="binding site" evidence="1">
    <location>
        <position position="396"/>
    </location>
    <ligand>
        <name>Zn(2+)</name>
        <dbReference type="ChEBI" id="CHEBI:29105"/>
    </ligand>
</feature>
<feature type="binding site" evidence="1">
    <location>
        <position position="399"/>
    </location>
    <ligand>
        <name>Zn(2+)</name>
        <dbReference type="ChEBI" id="CHEBI:29105"/>
    </ligand>
</feature>
<feature type="binding site" evidence="1">
    <location>
        <position position="429"/>
    </location>
    <ligand>
        <name>Zn(2+)</name>
        <dbReference type="ChEBI" id="CHEBI:29105"/>
    </ligand>
</feature>
<feature type="binding site" evidence="1">
    <location>
        <position position="432"/>
    </location>
    <ligand>
        <name>Zn(2+)</name>
        <dbReference type="ChEBI" id="CHEBI:29105"/>
    </ligand>
</feature>
<feature type="mutagenesis site" description="Complete loss of extracellular alkaline phosphatase or phospholipase C activity." evidence="5">
    <original>G</original>
    <variation>S</variation>
    <location>
        <position position="268"/>
    </location>
</feature>
<gene>
    <name type="primary">xcpR</name>
    <name type="ordered locus">PA3103</name>
</gene>
<comment type="function">
    <text evidence="5">ATPase component of the type II secretion system required for the energy-dependent secretion of extracellular factors such as proteases and toxins from the periplasm. Acts as a molecular motor to provide the energy that is required for assembly of the pseudopilus and the extrusion of substrates generated in the cytoplasm.</text>
</comment>
<comment type="catalytic activity">
    <reaction evidence="10">
        <text>ATP + H2O + cellular proteinSide 1 = ADP + phosphate + cellular proteinSide 2.</text>
        <dbReference type="EC" id="7.4.2.8"/>
    </reaction>
</comment>
<comment type="cofactor">
    <cofactor evidence="1">
        <name>Zn(2+)</name>
        <dbReference type="ChEBI" id="CHEBI:29105"/>
    </cofactor>
</comment>
<comment type="subunit">
    <text evidence="4 7 8">Homodimer (PubMed:9426126). Dimerization is directed by a relatively short domain near the extreme N-terminus and is essential for extracellular protein secretion (PubMed:9426126). May form homooligomers (PubMed:9426126). Interacts with XcpY/GspL (PubMed:9882649). Forms an inner membrane platform subcomplex with XcpS/GspF, XcpY/GspL and XcpZ/GspM (PubMed:16168578).</text>
</comment>
<comment type="subcellular location">
    <subcellularLocation>
        <location evidence="8">Cell inner membrane</location>
    </subcellularLocation>
    <text evidence="8">Membrane association is not an intrinsic property but requires the XcpY/GspL gene product.</text>
</comment>
<comment type="induction">
    <text evidence="6">By the two quorum-sensing circuits LasR-LasI and RhlR-RhlI in a growth-phase dependent manner.</text>
</comment>
<comment type="disruption phenotype">
    <text evidence="5">Mutants show complete loss of extracellular exotoxin A secretion.</text>
</comment>
<comment type="similarity">
    <text evidence="9">Belongs to the GSP E family.</text>
</comment>
<dbReference type="EC" id="7.4.2.8" evidence="10"/>
<dbReference type="EMBL" id="X62666">
    <property type="protein sequence ID" value="CAA44533.1"/>
    <property type="molecule type" value="Genomic_DNA"/>
</dbReference>
<dbReference type="EMBL" id="AE004091">
    <property type="protein sequence ID" value="AAG06491.1"/>
    <property type="molecule type" value="Genomic_DNA"/>
</dbReference>
<dbReference type="PIR" id="S25384">
    <property type="entry name" value="SKPSXR"/>
</dbReference>
<dbReference type="RefSeq" id="NP_251793.1">
    <property type="nucleotide sequence ID" value="NC_002516.2"/>
</dbReference>
<dbReference type="RefSeq" id="WP_003091377.1">
    <property type="nucleotide sequence ID" value="NZ_QZGE01000009.1"/>
</dbReference>
<dbReference type="SMR" id="Q00512"/>
<dbReference type="FunCoup" id="Q00512">
    <property type="interactions" value="349"/>
</dbReference>
<dbReference type="STRING" id="208964.PA3103"/>
<dbReference type="PaxDb" id="208964-PA3103"/>
<dbReference type="GeneID" id="877804"/>
<dbReference type="KEGG" id="pae:PA3103"/>
<dbReference type="PATRIC" id="fig|208964.12.peg.3255"/>
<dbReference type="PseudoCAP" id="PA3103"/>
<dbReference type="HOGENOM" id="CLU_013446_10_3_6"/>
<dbReference type="InParanoid" id="Q00512"/>
<dbReference type="OrthoDB" id="9804785at2"/>
<dbReference type="PhylomeDB" id="Q00512"/>
<dbReference type="BioCyc" id="PAER208964:G1FZ6-3159-MONOMER"/>
<dbReference type="Proteomes" id="UP000002438">
    <property type="component" value="Chromosome"/>
</dbReference>
<dbReference type="GO" id="GO:0005886">
    <property type="term" value="C:plasma membrane"/>
    <property type="evidence" value="ECO:0000318"/>
    <property type="project" value="GO_Central"/>
</dbReference>
<dbReference type="GO" id="GO:0015627">
    <property type="term" value="C:type II protein secretion system complex"/>
    <property type="evidence" value="ECO:0000314"/>
    <property type="project" value="PseudoCAP"/>
</dbReference>
<dbReference type="GO" id="GO:0005524">
    <property type="term" value="F:ATP binding"/>
    <property type="evidence" value="ECO:0007669"/>
    <property type="project" value="UniProtKB-KW"/>
</dbReference>
<dbReference type="GO" id="GO:0016887">
    <property type="term" value="F:ATP hydrolysis activity"/>
    <property type="evidence" value="ECO:0000318"/>
    <property type="project" value="GO_Central"/>
</dbReference>
<dbReference type="GO" id="GO:0046872">
    <property type="term" value="F:metal ion binding"/>
    <property type="evidence" value="ECO:0007669"/>
    <property type="project" value="UniProtKB-KW"/>
</dbReference>
<dbReference type="GO" id="GO:0008564">
    <property type="term" value="F:protein-exporting ATPase activity"/>
    <property type="evidence" value="ECO:0007669"/>
    <property type="project" value="UniProtKB-EC"/>
</dbReference>
<dbReference type="GO" id="GO:0015628">
    <property type="term" value="P:protein secretion by the type II secretion system"/>
    <property type="evidence" value="ECO:0000314"/>
    <property type="project" value="PseudoCAP"/>
</dbReference>
<dbReference type="CDD" id="cd01129">
    <property type="entry name" value="PulE-GspE-like"/>
    <property type="match status" value="1"/>
</dbReference>
<dbReference type="FunFam" id="3.30.450.90:FF:000001">
    <property type="entry name" value="Type II secretion system ATPase GspE"/>
    <property type="match status" value="1"/>
</dbReference>
<dbReference type="FunFam" id="3.40.50.300:FF:000398">
    <property type="entry name" value="Type IV pilus assembly ATPase PilB"/>
    <property type="match status" value="1"/>
</dbReference>
<dbReference type="Gene3D" id="3.30.450.90">
    <property type="match status" value="1"/>
</dbReference>
<dbReference type="Gene3D" id="3.40.50.300">
    <property type="entry name" value="P-loop containing nucleotide triphosphate hydrolases"/>
    <property type="match status" value="1"/>
</dbReference>
<dbReference type="Gene3D" id="3.30.300.160">
    <property type="entry name" value="Type II secretion system, protein E, N-terminal domain"/>
    <property type="match status" value="1"/>
</dbReference>
<dbReference type="InterPro" id="IPR054757">
    <property type="entry name" value="GSPE_N1E"/>
</dbReference>
<dbReference type="InterPro" id="IPR027417">
    <property type="entry name" value="P-loop_NTPase"/>
</dbReference>
<dbReference type="InterPro" id="IPR001482">
    <property type="entry name" value="T2SS/T4SS_dom"/>
</dbReference>
<dbReference type="InterPro" id="IPR037257">
    <property type="entry name" value="T2SS_E_N_sf"/>
</dbReference>
<dbReference type="InterPro" id="IPR013369">
    <property type="entry name" value="T2SS_GspE"/>
</dbReference>
<dbReference type="NCBIfam" id="TIGR02533">
    <property type="entry name" value="type_II_gspE"/>
    <property type="match status" value="1"/>
</dbReference>
<dbReference type="PANTHER" id="PTHR30258:SF27">
    <property type="entry name" value="BACTERIOPHAGE ADSORPTION PROTEIN B-RELATED"/>
    <property type="match status" value="1"/>
</dbReference>
<dbReference type="PANTHER" id="PTHR30258">
    <property type="entry name" value="TYPE II SECRETION SYSTEM PROTEIN GSPE-RELATED"/>
    <property type="match status" value="1"/>
</dbReference>
<dbReference type="Pfam" id="PF22341">
    <property type="entry name" value="GSPE_N1E"/>
    <property type="match status" value="1"/>
</dbReference>
<dbReference type="Pfam" id="PF00437">
    <property type="entry name" value="T2SSE"/>
    <property type="match status" value="1"/>
</dbReference>
<dbReference type="SUPFAM" id="SSF160246">
    <property type="entry name" value="EspE N-terminal domain-like"/>
    <property type="match status" value="1"/>
</dbReference>
<dbReference type="SUPFAM" id="SSF52540">
    <property type="entry name" value="P-loop containing nucleoside triphosphate hydrolases"/>
    <property type="match status" value="1"/>
</dbReference>
<dbReference type="PROSITE" id="PS00662">
    <property type="entry name" value="T2SP_E"/>
    <property type="match status" value="1"/>
</dbReference>
<organism>
    <name type="scientific">Pseudomonas aeruginosa (strain ATCC 15692 / DSM 22644 / CIP 104116 / JCM 14847 / LMG 12228 / 1C / PRS 101 / PAO1)</name>
    <dbReference type="NCBI Taxonomy" id="208964"/>
    <lineage>
        <taxon>Bacteria</taxon>
        <taxon>Pseudomonadati</taxon>
        <taxon>Pseudomonadota</taxon>
        <taxon>Gammaproteobacteria</taxon>
        <taxon>Pseudomonadales</taxon>
        <taxon>Pseudomonadaceae</taxon>
        <taxon>Pseudomonas</taxon>
    </lineage>
</organism>
<proteinExistence type="evidence at protein level"/>
<accession>Q00512</accession>
<name>GSPE_PSEAE</name>